<organism>
    <name type="scientific">Thermotoga sp. (strain RQ2)</name>
    <dbReference type="NCBI Taxonomy" id="126740"/>
    <lineage>
        <taxon>Bacteria</taxon>
        <taxon>Thermotogati</taxon>
        <taxon>Thermotogota</taxon>
        <taxon>Thermotogae</taxon>
        <taxon>Thermotogales</taxon>
        <taxon>Thermotogaceae</taxon>
        <taxon>Thermotoga</taxon>
    </lineage>
</organism>
<protein>
    <recommendedName>
        <fullName evidence="1">DNA ligase</fullName>
        <ecNumber evidence="1">6.5.1.2</ecNumber>
    </recommendedName>
    <alternativeName>
        <fullName evidence="1">Polydeoxyribonucleotide synthase [NAD(+)]</fullName>
    </alternativeName>
</protein>
<accession>B1LA51</accession>
<sequence length="688" mass="78807">MSERKIPKEVIEEVERLREEIEYHNYRYYVLNDPVITDEEYDKLMRRLIELERMYPELVTPDSPTQRVGGKVLEGFKTVKHSVPMLSLDNTYNEEEILEFDRRVKKTLQEAEVEYVAELKIDGVSIALRYENGKFVLGATRGDGIEGEDVSENVKTVRSIPLRLRKPVTVEVRGEIYMPVDEFKRLNDEREEEGLPPFANPRNAAAGTLRQLNTALVAARRLDSFIYYVVHPENYGLKTQWEALQFLKELGFKVNPHSKLCKNIQEVIDYWREWEERKKELDYWVDGVVVKVNRFDFQRILGETSKAPRWAIAFKFPAEQARTRVLDVTIQVGRTGVLTPVAELEPVQLAGTIVKRASLHNFEYIREKDIRIGDYVFVEKAGGIIPQIVKSIPELRTGSEKEIKPPDKCPVCGGKVGKLDPEEVALRCLNPHCPAKLKRALRTLVSREALDIEGLGEKLIDRLVDAGLVKDIADIFYLTPFDLAQLGPGIGQRTIAKILQEIEEAKKRPLHKLITGLGIPMVGQKTAKILAEHFKSLEAIADASYETLKDIPGIGPEIAKSIVEYFRNPKTREIIEKLKKAGVKLEERVMKLDILKGLTFAVTGTLKNFTREEIVEFFEKLGAKVVNSVSRNTDYLIVGENPGSKYEKAKMLKVKTMSEEEFLEFVRKRAELKGYNFDEIMRSWKEWS</sequence>
<reference key="1">
    <citation type="journal article" date="2011" name="J. Bacteriol.">
        <title>Genome sequence of Thermotoga sp. strain RQ2, a hyperthermophilic bacterium isolated from a geothermally heated region of the seafloor near Ribeira Quente, the Azores.</title>
        <authorList>
            <person name="Swithers K.S."/>
            <person name="DiPippo J.L."/>
            <person name="Bruce D.C."/>
            <person name="Detter C."/>
            <person name="Tapia R."/>
            <person name="Han S."/>
            <person name="Saunders E."/>
            <person name="Goodwin L.A."/>
            <person name="Han J."/>
            <person name="Woyke T."/>
            <person name="Pitluck S."/>
            <person name="Pennacchio L."/>
            <person name="Nolan M."/>
            <person name="Mikhailova N."/>
            <person name="Lykidis A."/>
            <person name="Land M.L."/>
            <person name="Brettin T."/>
            <person name="Stetter K.O."/>
            <person name="Nelson K.E."/>
            <person name="Gogarten J.P."/>
            <person name="Noll K.M."/>
        </authorList>
    </citation>
    <scope>NUCLEOTIDE SEQUENCE [LARGE SCALE GENOMIC DNA]</scope>
    <source>
        <strain>RQ2</strain>
    </source>
</reference>
<gene>
    <name evidence="1" type="primary">ligA</name>
    <name type="ordered locus">TRQ2_0847</name>
</gene>
<comment type="function">
    <text evidence="1">DNA ligase that catalyzes the formation of phosphodiester linkages between 5'-phosphoryl and 3'-hydroxyl groups in double-stranded DNA using NAD as a coenzyme and as the energy source for the reaction. It is essential for DNA replication and repair of damaged DNA.</text>
</comment>
<comment type="catalytic activity">
    <reaction evidence="1">
        <text>NAD(+) + (deoxyribonucleotide)n-3'-hydroxyl + 5'-phospho-(deoxyribonucleotide)m = (deoxyribonucleotide)n+m + AMP + beta-nicotinamide D-nucleotide.</text>
        <dbReference type="EC" id="6.5.1.2"/>
    </reaction>
</comment>
<comment type="cofactor">
    <cofactor evidence="1">
        <name>Mg(2+)</name>
        <dbReference type="ChEBI" id="CHEBI:18420"/>
    </cofactor>
    <cofactor evidence="1">
        <name>Mn(2+)</name>
        <dbReference type="ChEBI" id="CHEBI:29035"/>
    </cofactor>
</comment>
<comment type="similarity">
    <text evidence="1">Belongs to the NAD-dependent DNA ligase family. LigA subfamily.</text>
</comment>
<dbReference type="EC" id="6.5.1.2" evidence="1"/>
<dbReference type="EMBL" id="CP000969">
    <property type="protein sequence ID" value="ACB09199.1"/>
    <property type="molecule type" value="Genomic_DNA"/>
</dbReference>
<dbReference type="RefSeq" id="WP_011943410.1">
    <property type="nucleotide sequence ID" value="NC_010483.1"/>
</dbReference>
<dbReference type="SMR" id="B1LA51"/>
<dbReference type="KEGG" id="trq:TRQ2_0847"/>
<dbReference type="HOGENOM" id="CLU_007764_2_1_0"/>
<dbReference type="Proteomes" id="UP000001687">
    <property type="component" value="Chromosome"/>
</dbReference>
<dbReference type="GO" id="GO:0005829">
    <property type="term" value="C:cytosol"/>
    <property type="evidence" value="ECO:0007669"/>
    <property type="project" value="TreeGrafter"/>
</dbReference>
<dbReference type="GO" id="GO:0003677">
    <property type="term" value="F:DNA binding"/>
    <property type="evidence" value="ECO:0007669"/>
    <property type="project" value="InterPro"/>
</dbReference>
<dbReference type="GO" id="GO:0003911">
    <property type="term" value="F:DNA ligase (NAD+) activity"/>
    <property type="evidence" value="ECO:0007669"/>
    <property type="project" value="UniProtKB-UniRule"/>
</dbReference>
<dbReference type="GO" id="GO:0046872">
    <property type="term" value="F:metal ion binding"/>
    <property type="evidence" value="ECO:0007669"/>
    <property type="project" value="UniProtKB-KW"/>
</dbReference>
<dbReference type="GO" id="GO:0006281">
    <property type="term" value="P:DNA repair"/>
    <property type="evidence" value="ECO:0007669"/>
    <property type="project" value="UniProtKB-KW"/>
</dbReference>
<dbReference type="GO" id="GO:0006260">
    <property type="term" value="P:DNA replication"/>
    <property type="evidence" value="ECO:0007669"/>
    <property type="project" value="UniProtKB-KW"/>
</dbReference>
<dbReference type="CDD" id="cd17748">
    <property type="entry name" value="BRCT_DNA_ligase_like"/>
    <property type="match status" value="1"/>
</dbReference>
<dbReference type="CDD" id="cd00114">
    <property type="entry name" value="LIGANc"/>
    <property type="match status" value="1"/>
</dbReference>
<dbReference type="FunFam" id="1.10.150.20:FF:000006">
    <property type="entry name" value="DNA ligase"/>
    <property type="match status" value="1"/>
</dbReference>
<dbReference type="FunFam" id="1.10.150.20:FF:000007">
    <property type="entry name" value="DNA ligase"/>
    <property type="match status" value="1"/>
</dbReference>
<dbReference type="FunFam" id="1.10.287.610:FF:000002">
    <property type="entry name" value="DNA ligase"/>
    <property type="match status" value="1"/>
</dbReference>
<dbReference type="FunFam" id="2.40.50.140:FF:000012">
    <property type="entry name" value="DNA ligase"/>
    <property type="match status" value="1"/>
</dbReference>
<dbReference type="FunFam" id="3.30.470.30:FF:000001">
    <property type="entry name" value="DNA ligase"/>
    <property type="match status" value="1"/>
</dbReference>
<dbReference type="FunFam" id="3.40.50.10190:FF:000086">
    <property type="entry name" value="DNA ligase"/>
    <property type="match status" value="1"/>
</dbReference>
<dbReference type="Gene3D" id="6.20.10.30">
    <property type="match status" value="1"/>
</dbReference>
<dbReference type="Gene3D" id="1.10.150.20">
    <property type="entry name" value="5' to 3' exonuclease, C-terminal subdomain"/>
    <property type="match status" value="2"/>
</dbReference>
<dbReference type="Gene3D" id="3.40.50.10190">
    <property type="entry name" value="BRCT domain"/>
    <property type="match status" value="1"/>
</dbReference>
<dbReference type="Gene3D" id="3.30.470.30">
    <property type="entry name" value="DNA ligase/mRNA capping enzyme"/>
    <property type="match status" value="1"/>
</dbReference>
<dbReference type="Gene3D" id="1.10.287.610">
    <property type="entry name" value="Helix hairpin bin"/>
    <property type="match status" value="1"/>
</dbReference>
<dbReference type="Gene3D" id="2.40.50.140">
    <property type="entry name" value="Nucleic acid-binding proteins"/>
    <property type="match status" value="1"/>
</dbReference>
<dbReference type="HAMAP" id="MF_01588">
    <property type="entry name" value="DNA_ligase_A"/>
    <property type="match status" value="1"/>
</dbReference>
<dbReference type="InterPro" id="IPR001357">
    <property type="entry name" value="BRCT_dom"/>
</dbReference>
<dbReference type="InterPro" id="IPR036420">
    <property type="entry name" value="BRCT_dom_sf"/>
</dbReference>
<dbReference type="InterPro" id="IPR041663">
    <property type="entry name" value="DisA/LigA_HHH"/>
</dbReference>
<dbReference type="InterPro" id="IPR001679">
    <property type="entry name" value="DNA_ligase"/>
</dbReference>
<dbReference type="InterPro" id="IPR018239">
    <property type="entry name" value="DNA_ligase_AS"/>
</dbReference>
<dbReference type="InterPro" id="IPR033136">
    <property type="entry name" value="DNA_ligase_CS"/>
</dbReference>
<dbReference type="InterPro" id="IPR013839">
    <property type="entry name" value="DNAligase_adenylation"/>
</dbReference>
<dbReference type="InterPro" id="IPR013840">
    <property type="entry name" value="DNAligase_N"/>
</dbReference>
<dbReference type="InterPro" id="IPR003583">
    <property type="entry name" value="Hlx-hairpin-Hlx_DNA-bd_motif"/>
</dbReference>
<dbReference type="InterPro" id="IPR012340">
    <property type="entry name" value="NA-bd_OB-fold"/>
</dbReference>
<dbReference type="InterPro" id="IPR004150">
    <property type="entry name" value="NAD_DNA_ligase_OB"/>
</dbReference>
<dbReference type="InterPro" id="IPR010994">
    <property type="entry name" value="RuvA_2-like"/>
</dbReference>
<dbReference type="InterPro" id="IPR004149">
    <property type="entry name" value="Znf_DNAligase_C4"/>
</dbReference>
<dbReference type="NCBIfam" id="TIGR00575">
    <property type="entry name" value="dnlj"/>
    <property type="match status" value="1"/>
</dbReference>
<dbReference type="NCBIfam" id="NF005932">
    <property type="entry name" value="PRK07956.1"/>
    <property type="match status" value="1"/>
</dbReference>
<dbReference type="PANTHER" id="PTHR23389">
    <property type="entry name" value="CHROMOSOME TRANSMISSION FIDELITY FACTOR 18"/>
    <property type="match status" value="1"/>
</dbReference>
<dbReference type="PANTHER" id="PTHR23389:SF9">
    <property type="entry name" value="DNA LIGASE"/>
    <property type="match status" value="1"/>
</dbReference>
<dbReference type="Pfam" id="PF00533">
    <property type="entry name" value="BRCT"/>
    <property type="match status" value="1"/>
</dbReference>
<dbReference type="Pfam" id="PF01653">
    <property type="entry name" value="DNA_ligase_aden"/>
    <property type="match status" value="1"/>
</dbReference>
<dbReference type="Pfam" id="PF03120">
    <property type="entry name" value="DNA_ligase_OB"/>
    <property type="match status" value="1"/>
</dbReference>
<dbReference type="Pfam" id="PF03119">
    <property type="entry name" value="DNA_ligase_ZBD"/>
    <property type="match status" value="1"/>
</dbReference>
<dbReference type="Pfam" id="PF12826">
    <property type="entry name" value="HHH_2"/>
    <property type="match status" value="1"/>
</dbReference>
<dbReference type="Pfam" id="PF14520">
    <property type="entry name" value="HHH_5"/>
    <property type="match status" value="1"/>
</dbReference>
<dbReference type="Pfam" id="PF22745">
    <property type="entry name" value="Nlig-Ia"/>
    <property type="match status" value="1"/>
</dbReference>
<dbReference type="PIRSF" id="PIRSF001604">
    <property type="entry name" value="LigA"/>
    <property type="match status" value="1"/>
</dbReference>
<dbReference type="SMART" id="SM00292">
    <property type="entry name" value="BRCT"/>
    <property type="match status" value="1"/>
</dbReference>
<dbReference type="SMART" id="SM00278">
    <property type="entry name" value="HhH1"/>
    <property type="match status" value="3"/>
</dbReference>
<dbReference type="SMART" id="SM00532">
    <property type="entry name" value="LIGANc"/>
    <property type="match status" value="1"/>
</dbReference>
<dbReference type="SUPFAM" id="SSF52113">
    <property type="entry name" value="BRCT domain"/>
    <property type="match status" value="1"/>
</dbReference>
<dbReference type="SUPFAM" id="SSF56091">
    <property type="entry name" value="DNA ligase/mRNA capping enzyme, catalytic domain"/>
    <property type="match status" value="1"/>
</dbReference>
<dbReference type="SUPFAM" id="SSF50249">
    <property type="entry name" value="Nucleic acid-binding proteins"/>
    <property type="match status" value="1"/>
</dbReference>
<dbReference type="SUPFAM" id="SSF47781">
    <property type="entry name" value="RuvA domain 2-like"/>
    <property type="match status" value="1"/>
</dbReference>
<dbReference type="PROSITE" id="PS50172">
    <property type="entry name" value="BRCT"/>
    <property type="match status" value="1"/>
</dbReference>
<dbReference type="PROSITE" id="PS01055">
    <property type="entry name" value="DNA_LIGASE_N1"/>
    <property type="match status" value="1"/>
</dbReference>
<dbReference type="PROSITE" id="PS01056">
    <property type="entry name" value="DNA_LIGASE_N2"/>
    <property type="match status" value="1"/>
</dbReference>
<keyword id="KW-0227">DNA damage</keyword>
<keyword id="KW-0234">DNA repair</keyword>
<keyword id="KW-0235">DNA replication</keyword>
<keyword id="KW-0436">Ligase</keyword>
<keyword id="KW-0460">Magnesium</keyword>
<keyword id="KW-0464">Manganese</keyword>
<keyword id="KW-0479">Metal-binding</keyword>
<keyword id="KW-0520">NAD</keyword>
<keyword id="KW-0862">Zinc</keyword>
<proteinExistence type="inferred from homology"/>
<name>DNLJ_THESQ</name>
<feature type="chain" id="PRO_0000380497" description="DNA ligase">
    <location>
        <begin position="1"/>
        <end position="688"/>
    </location>
</feature>
<feature type="domain" description="BRCT" evidence="1">
    <location>
        <begin position="590"/>
        <end position="679"/>
    </location>
</feature>
<feature type="active site" description="N6-AMP-lysine intermediate" evidence="1">
    <location>
        <position position="120"/>
    </location>
</feature>
<feature type="binding site" evidence="1">
    <location>
        <begin position="38"/>
        <end position="42"/>
    </location>
    <ligand>
        <name>NAD(+)</name>
        <dbReference type="ChEBI" id="CHEBI:57540"/>
    </ligand>
</feature>
<feature type="binding site" evidence="1">
    <location>
        <begin position="87"/>
        <end position="88"/>
    </location>
    <ligand>
        <name>NAD(+)</name>
        <dbReference type="ChEBI" id="CHEBI:57540"/>
    </ligand>
</feature>
<feature type="binding site" evidence="1">
    <location>
        <position position="118"/>
    </location>
    <ligand>
        <name>NAD(+)</name>
        <dbReference type="ChEBI" id="CHEBI:57540"/>
    </ligand>
</feature>
<feature type="binding site" evidence="1">
    <location>
        <position position="141"/>
    </location>
    <ligand>
        <name>NAD(+)</name>
        <dbReference type="ChEBI" id="CHEBI:57540"/>
    </ligand>
</feature>
<feature type="binding site" evidence="1">
    <location>
        <position position="175"/>
    </location>
    <ligand>
        <name>NAD(+)</name>
        <dbReference type="ChEBI" id="CHEBI:57540"/>
    </ligand>
</feature>
<feature type="binding site" evidence="1">
    <location>
        <position position="291"/>
    </location>
    <ligand>
        <name>NAD(+)</name>
        <dbReference type="ChEBI" id="CHEBI:57540"/>
    </ligand>
</feature>
<feature type="binding site" evidence="1">
    <location>
        <position position="315"/>
    </location>
    <ligand>
        <name>NAD(+)</name>
        <dbReference type="ChEBI" id="CHEBI:57540"/>
    </ligand>
</feature>
<feature type="binding site" evidence="1">
    <location>
        <position position="409"/>
    </location>
    <ligand>
        <name>Zn(2+)</name>
        <dbReference type="ChEBI" id="CHEBI:29105"/>
    </ligand>
</feature>
<feature type="binding site" evidence="1">
    <location>
        <position position="412"/>
    </location>
    <ligand>
        <name>Zn(2+)</name>
        <dbReference type="ChEBI" id="CHEBI:29105"/>
    </ligand>
</feature>
<feature type="binding site" evidence="1">
    <location>
        <position position="428"/>
    </location>
    <ligand>
        <name>Zn(2+)</name>
        <dbReference type="ChEBI" id="CHEBI:29105"/>
    </ligand>
</feature>
<feature type="binding site" evidence="1">
    <location>
        <position position="433"/>
    </location>
    <ligand>
        <name>Zn(2+)</name>
        <dbReference type="ChEBI" id="CHEBI:29105"/>
    </ligand>
</feature>
<evidence type="ECO:0000255" key="1">
    <source>
        <dbReference type="HAMAP-Rule" id="MF_01588"/>
    </source>
</evidence>